<accession>Q5WWZ8</accession>
<sequence length="823" mass="94078">MDNTYNPQEVEEQAQQYWHKKQSFNVTEDLNKEKFYCLSMFPYPSGTLHMGHVRNYTLGDVIARYQRALGKNVLQPIGWDSFGLPAENAAIKNKIPPAEWTRKNIAAMKEQFLRLGNAYDWKREITTCDPEYYRWEQWFFIRLFEKGLVYKKNAVVNWDPVDQTVLANEQVVDGRGWRSGALVERKEISQWFIKITSYADELLSSLDSLDEWPAQVKQMQRNWIGKSIGTEIYFNVNNYPKRLKIYTTRPDTLMGATYLAVATDHPLAKEAASNNKKVQEFLDSCQGIKIAEAELATMEKRGIDTGMTAIHPITGKELPIWVANFVLMQYGSGAVMAVPAHDQRDWEFAQKYQLPVKQVIKPIGIEHDFNQSAYTEEGILINSNQFDNLLSSKAIQVITNFLEENDAGKATINYRLRDWGVSRQRYWGTPIPMIICEQCGIVPVPDEELPVVLPENVDFTGTGSPLTQCKEFVNITCPKCGQDATRETDTFDTFVESSWYYARFACKGQENAMLDDRAKYWTPVDQYIGGIEHAVMHLLYARFFHKLMRDEGLVNSDEPFKALLTQGMVLKDGHKMSKSLGNVVDPNHLINTYGADTARLFVMFASPPEQSLEWSDSGVEGAHRFLKRVWAFSHQHRDMLIDINDSILSGNGHVDWKEAESRLKKSRHIVHQILAQATHDYDRNQFNTVVSGCMKLFNEISDYSIETENDKFFIHSSISILLRLLAPITPHICHCLWQQLGFDKAIIDAPWPKVDKSALKTDEVDYVVQVNGKLRAQFTASTDATEEELIAAAKEHAHNFVVNHTIKKAIIVPHRQLINLVIG</sequence>
<evidence type="ECO:0000255" key="1">
    <source>
        <dbReference type="HAMAP-Rule" id="MF_00049"/>
    </source>
</evidence>
<dbReference type="EC" id="6.1.1.4" evidence="1"/>
<dbReference type="EMBL" id="CR628337">
    <property type="protein sequence ID" value="CAH15541.1"/>
    <property type="molecule type" value="Genomic_DNA"/>
</dbReference>
<dbReference type="RefSeq" id="WP_011215377.1">
    <property type="nucleotide sequence ID" value="NC_006369.1"/>
</dbReference>
<dbReference type="SMR" id="Q5WWZ8"/>
<dbReference type="KEGG" id="lpf:lpl1301"/>
<dbReference type="LegioList" id="lpl1301"/>
<dbReference type="HOGENOM" id="CLU_004427_0_0_6"/>
<dbReference type="Proteomes" id="UP000002517">
    <property type="component" value="Chromosome"/>
</dbReference>
<dbReference type="GO" id="GO:0005829">
    <property type="term" value="C:cytosol"/>
    <property type="evidence" value="ECO:0007669"/>
    <property type="project" value="TreeGrafter"/>
</dbReference>
<dbReference type="GO" id="GO:0002161">
    <property type="term" value="F:aminoacyl-tRNA deacylase activity"/>
    <property type="evidence" value="ECO:0007669"/>
    <property type="project" value="InterPro"/>
</dbReference>
<dbReference type="GO" id="GO:0005524">
    <property type="term" value="F:ATP binding"/>
    <property type="evidence" value="ECO:0007669"/>
    <property type="project" value="UniProtKB-UniRule"/>
</dbReference>
<dbReference type="GO" id="GO:0004823">
    <property type="term" value="F:leucine-tRNA ligase activity"/>
    <property type="evidence" value="ECO:0007669"/>
    <property type="project" value="UniProtKB-UniRule"/>
</dbReference>
<dbReference type="GO" id="GO:0006429">
    <property type="term" value="P:leucyl-tRNA aminoacylation"/>
    <property type="evidence" value="ECO:0007669"/>
    <property type="project" value="UniProtKB-UniRule"/>
</dbReference>
<dbReference type="CDD" id="cd07958">
    <property type="entry name" value="Anticodon_Ia_Leu_BEm"/>
    <property type="match status" value="1"/>
</dbReference>
<dbReference type="CDD" id="cd00812">
    <property type="entry name" value="LeuRS_core"/>
    <property type="match status" value="1"/>
</dbReference>
<dbReference type="FunFam" id="1.10.730.10:FF:000003">
    <property type="entry name" value="Leucine--tRNA ligase"/>
    <property type="match status" value="1"/>
</dbReference>
<dbReference type="FunFam" id="3.40.50.620:FF:000056">
    <property type="entry name" value="Leucine--tRNA ligase"/>
    <property type="match status" value="1"/>
</dbReference>
<dbReference type="FunFam" id="3.40.50.620:FF:000395">
    <property type="entry name" value="Leucine--tRNA ligase"/>
    <property type="match status" value="1"/>
</dbReference>
<dbReference type="FunFam" id="3.90.740.10:FF:000012">
    <property type="entry name" value="Leucine--tRNA ligase"/>
    <property type="match status" value="1"/>
</dbReference>
<dbReference type="Gene3D" id="3.10.20.590">
    <property type="match status" value="1"/>
</dbReference>
<dbReference type="Gene3D" id="3.40.50.620">
    <property type="entry name" value="HUPs"/>
    <property type="match status" value="2"/>
</dbReference>
<dbReference type="Gene3D" id="1.10.730.10">
    <property type="entry name" value="Isoleucyl-tRNA Synthetase, Domain 1"/>
    <property type="match status" value="1"/>
</dbReference>
<dbReference type="HAMAP" id="MF_00049_B">
    <property type="entry name" value="Leu_tRNA_synth_B"/>
    <property type="match status" value="1"/>
</dbReference>
<dbReference type="InterPro" id="IPR001412">
    <property type="entry name" value="aa-tRNA-synth_I_CS"/>
</dbReference>
<dbReference type="InterPro" id="IPR002300">
    <property type="entry name" value="aa-tRNA-synth_Ia"/>
</dbReference>
<dbReference type="InterPro" id="IPR002302">
    <property type="entry name" value="Leu-tRNA-ligase"/>
</dbReference>
<dbReference type="InterPro" id="IPR025709">
    <property type="entry name" value="Leu_tRNA-synth_edit"/>
</dbReference>
<dbReference type="InterPro" id="IPR013155">
    <property type="entry name" value="M/V/L/I-tRNA-synth_anticd-bd"/>
</dbReference>
<dbReference type="InterPro" id="IPR015413">
    <property type="entry name" value="Methionyl/Leucyl_tRNA_Synth"/>
</dbReference>
<dbReference type="InterPro" id="IPR014729">
    <property type="entry name" value="Rossmann-like_a/b/a_fold"/>
</dbReference>
<dbReference type="InterPro" id="IPR009080">
    <property type="entry name" value="tRNAsynth_Ia_anticodon-bd"/>
</dbReference>
<dbReference type="InterPro" id="IPR009008">
    <property type="entry name" value="Val/Leu/Ile-tRNA-synth_edit"/>
</dbReference>
<dbReference type="NCBIfam" id="TIGR00396">
    <property type="entry name" value="leuS_bact"/>
    <property type="match status" value="1"/>
</dbReference>
<dbReference type="PANTHER" id="PTHR43740:SF2">
    <property type="entry name" value="LEUCINE--TRNA LIGASE, MITOCHONDRIAL"/>
    <property type="match status" value="1"/>
</dbReference>
<dbReference type="PANTHER" id="PTHR43740">
    <property type="entry name" value="LEUCYL-TRNA SYNTHETASE"/>
    <property type="match status" value="1"/>
</dbReference>
<dbReference type="Pfam" id="PF08264">
    <property type="entry name" value="Anticodon_1"/>
    <property type="match status" value="1"/>
</dbReference>
<dbReference type="Pfam" id="PF00133">
    <property type="entry name" value="tRNA-synt_1"/>
    <property type="match status" value="1"/>
</dbReference>
<dbReference type="Pfam" id="PF13603">
    <property type="entry name" value="tRNA-synt_1_2"/>
    <property type="match status" value="1"/>
</dbReference>
<dbReference type="Pfam" id="PF09334">
    <property type="entry name" value="tRNA-synt_1g"/>
    <property type="match status" value="1"/>
</dbReference>
<dbReference type="PRINTS" id="PR00985">
    <property type="entry name" value="TRNASYNTHLEU"/>
</dbReference>
<dbReference type="SUPFAM" id="SSF47323">
    <property type="entry name" value="Anticodon-binding domain of a subclass of class I aminoacyl-tRNA synthetases"/>
    <property type="match status" value="1"/>
</dbReference>
<dbReference type="SUPFAM" id="SSF52374">
    <property type="entry name" value="Nucleotidylyl transferase"/>
    <property type="match status" value="1"/>
</dbReference>
<dbReference type="SUPFAM" id="SSF50677">
    <property type="entry name" value="ValRS/IleRS/LeuRS editing domain"/>
    <property type="match status" value="1"/>
</dbReference>
<dbReference type="PROSITE" id="PS00178">
    <property type="entry name" value="AA_TRNA_LIGASE_I"/>
    <property type="match status" value="1"/>
</dbReference>
<name>SYL_LEGPL</name>
<feature type="chain" id="PRO_0000152033" description="Leucine--tRNA ligase">
    <location>
        <begin position="1"/>
        <end position="823"/>
    </location>
</feature>
<feature type="short sequence motif" description="'HIGH' region">
    <location>
        <begin position="42"/>
        <end position="52"/>
    </location>
</feature>
<feature type="short sequence motif" description="'KMSKS' region">
    <location>
        <begin position="575"/>
        <end position="579"/>
    </location>
</feature>
<feature type="binding site" evidence="1">
    <location>
        <position position="578"/>
    </location>
    <ligand>
        <name>ATP</name>
        <dbReference type="ChEBI" id="CHEBI:30616"/>
    </ligand>
</feature>
<reference key="1">
    <citation type="journal article" date="2004" name="Nat. Genet.">
        <title>Evidence in the Legionella pneumophila genome for exploitation of host cell functions and high genome plasticity.</title>
        <authorList>
            <person name="Cazalet C."/>
            <person name="Rusniok C."/>
            <person name="Brueggemann H."/>
            <person name="Zidane N."/>
            <person name="Magnier A."/>
            <person name="Ma L."/>
            <person name="Tichit M."/>
            <person name="Jarraud S."/>
            <person name="Bouchier C."/>
            <person name="Vandenesch F."/>
            <person name="Kunst F."/>
            <person name="Etienne J."/>
            <person name="Glaser P."/>
            <person name="Buchrieser C."/>
        </authorList>
    </citation>
    <scope>NUCLEOTIDE SEQUENCE [LARGE SCALE GENOMIC DNA]</scope>
    <source>
        <strain>Lens</strain>
    </source>
</reference>
<protein>
    <recommendedName>
        <fullName evidence="1">Leucine--tRNA ligase</fullName>
        <ecNumber evidence="1">6.1.1.4</ecNumber>
    </recommendedName>
    <alternativeName>
        <fullName evidence="1">Leucyl-tRNA synthetase</fullName>
        <shortName evidence="1">LeuRS</shortName>
    </alternativeName>
</protein>
<comment type="catalytic activity">
    <reaction evidence="1">
        <text>tRNA(Leu) + L-leucine + ATP = L-leucyl-tRNA(Leu) + AMP + diphosphate</text>
        <dbReference type="Rhea" id="RHEA:11688"/>
        <dbReference type="Rhea" id="RHEA-COMP:9613"/>
        <dbReference type="Rhea" id="RHEA-COMP:9622"/>
        <dbReference type="ChEBI" id="CHEBI:30616"/>
        <dbReference type="ChEBI" id="CHEBI:33019"/>
        <dbReference type="ChEBI" id="CHEBI:57427"/>
        <dbReference type="ChEBI" id="CHEBI:78442"/>
        <dbReference type="ChEBI" id="CHEBI:78494"/>
        <dbReference type="ChEBI" id="CHEBI:456215"/>
        <dbReference type="EC" id="6.1.1.4"/>
    </reaction>
</comment>
<comment type="subcellular location">
    <subcellularLocation>
        <location evidence="1">Cytoplasm</location>
    </subcellularLocation>
</comment>
<comment type="similarity">
    <text evidence="1">Belongs to the class-I aminoacyl-tRNA synthetase family.</text>
</comment>
<organism>
    <name type="scientific">Legionella pneumophila (strain Lens)</name>
    <dbReference type="NCBI Taxonomy" id="297245"/>
    <lineage>
        <taxon>Bacteria</taxon>
        <taxon>Pseudomonadati</taxon>
        <taxon>Pseudomonadota</taxon>
        <taxon>Gammaproteobacteria</taxon>
        <taxon>Legionellales</taxon>
        <taxon>Legionellaceae</taxon>
        <taxon>Legionella</taxon>
    </lineage>
</organism>
<keyword id="KW-0030">Aminoacyl-tRNA synthetase</keyword>
<keyword id="KW-0067">ATP-binding</keyword>
<keyword id="KW-0963">Cytoplasm</keyword>
<keyword id="KW-0436">Ligase</keyword>
<keyword id="KW-0547">Nucleotide-binding</keyword>
<keyword id="KW-0648">Protein biosynthesis</keyword>
<proteinExistence type="inferred from homology"/>
<gene>
    <name evidence="1" type="primary">leuS</name>
    <name type="ordered locus">lpl1301</name>
</gene>